<proteinExistence type="evidence at protein level"/>
<accession>Q9VSH0</accession>
<reference key="1">
    <citation type="journal article" date="2000" name="Science">
        <title>The genome sequence of Drosophila melanogaster.</title>
        <authorList>
            <person name="Adams M.D."/>
            <person name="Celniker S.E."/>
            <person name="Holt R.A."/>
            <person name="Evans C.A."/>
            <person name="Gocayne J.D."/>
            <person name="Amanatides P.G."/>
            <person name="Scherer S.E."/>
            <person name="Li P.W."/>
            <person name="Hoskins R.A."/>
            <person name="Galle R.F."/>
            <person name="George R.A."/>
            <person name="Lewis S.E."/>
            <person name="Richards S."/>
            <person name="Ashburner M."/>
            <person name="Henderson S.N."/>
            <person name="Sutton G.G."/>
            <person name="Wortman J.R."/>
            <person name="Yandell M.D."/>
            <person name="Zhang Q."/>
            <person name="Chen L.X."/>
            <person name="Brandon R.C."/>
            <person name="Rogers Y.-H.C."/>
            <person name="Blazej R.G."/>
            <person name="Champe M."/>
            <person name="Pfeiffer B.D."/>
            <person name="Wan K.H."/>
            <person name="Doyle C."/>
            <person name="Baxter E.G."/>
            <person name="Helt G."/>
            <person name="Nelson C.R."/>
            <person name="Miklos G.L.G."/>
            <person name="Abril J.F."/>
            <person name="Agbayani A."/>
            <person name="An H.-J."/>
            <person name="Andrews-Pfannkoch C."/>
            <person name="Baldwin D."/>
            <person name="Ballew R.M."/>
            <person name="Basu A."/>
            <person name="Baxendale J."/>
            <person name="Bayraktaroglu L."/>
            <person name="Beasley E.M."/>
            <person name="Beeson K.Y."/>
            <person name="Benos P.V."/>
            <person name="Berman B.P."/>
            <person name="Bhandari D."/>
            <person name="Bolshakov S."/>
            <person name="Borkova D."/>
            <person name="Botchan M.R."/>
            <person name="Bouck J."/>
            <person name="Brokstein P."/>
            <person name="Brottier P."/>
            <person name="Burtis K.C."/>
            <person name="Busam D.A."/>
            <person name="Butler H."/>
            <person name="Cadieu E."/>
            <person name="Center A."/>
            <person name="Chandra I."/>
            <person name="Cherry J.M."/>
            <person name="Cawley S."/>
            <person name="Dahlke C."/>
            <person name="Davenport L.B."/>
            <person name="Davies P."/>
            <person name="de Pablos B."/>
            <person name="Delcher A."/>
            <person name="Deng Z."/>
            <person name="Mays A.D."/>
            <person name="Dew I."/>
            <person name="Dietz S.M."/>
            <person name="Dodson K."/>
            <person name="Doup L.E."/>
            <person name="Downes M."/>
            <person name="Dugan-Rocha S."/>
            <person name="Dunkov B.C."/>
            <person name="Dunn P."/>
            <person name="Durbin K.J."/>
            <person name="Evangelista C.C."/>
            <person name="Ferraz C."/>
            <person name="Ferriera S."/>
            <person name="Fleischmann W."/>
            <person name="Fosler C."/>
            <person name="Gabrielian A.E."/>
            <person name="Garg N.S."/>
            <person name="Gelbart W.M."/>
            <person name="Glasser K."/>
            <person name="Glodek A."/>
            <person name="Gong F."/>
            <person name="Gorrell J.H."/>
            <person name="Gu Z."/>
            <person name="Guan P."/>
            <person name="Harris M."/>
            <person name="Harris N.L."/>
            <person name="Harvey D.A."/>
            <person name="Heiman T.J."/>
            <person name="Hernandez J.R."/>
            <person name="Houck J."/>
            <person name="Hostin D."/>
            <person name="Houston K.A."/>
            <person name="Howland T.J."/>
            <person name="Wei M.-H."/>
            <person name="Ibegwam C."/>
            <person name="Jalali M."/>
            <person name="Kalush F."/>
            <person name="Karpen G.H."/>
            <person name="Ke Z."/>
            <person name="Kennison J.A."/>
            <person name="Ketchum K.A."/>
            <person name="Kimmel B.E."/>
            <person name="Kodira C.D."/>
            <person name="Kraft C.L."/>
            <person name="Kravitz S."/>
            <person name="Kulp D."/>
            <person name="Lai Z."/>
            <person name="Lasko P."/>
            <person name="Lei Y."/>
            <person name="Levitsky A.A."/>
            <person name="Li J.H."/>
            <person name="Li Z."/>
            <person name="Liang Y."/>
            <person name="Lin X."/>
            <person name="Liu X."/>
            <person name="Mattei B."/>
            <person name="McIntosh T.C."/>
            <person name="McLeod M.P."/>
            <person name="McPherson D."/>
            <person name="Merkulov G."/>
            <person name="Milshina N.V."/>
            <person name="Mobarry C."/>
            <person name="Morris J."/>
            <person name="Moshrefi A."/>
            <person name="Mount S.M."/>
            <person name="Moy M."/>
            <person name="Murphy B."/>
            <person name="Murphy L."/>
            <person name="Muzny D.M."/>
            <person name="Nelson D.L."/>
            <person name="Nelson D.R."/>
            <person name="Nelson K.A."/>
            <person name="Nixon K."/>
            <person name="Nusskern D.R."/>
            <person name="Pacleb J.M."/>
            <person name="Palazzolo M."/>
            <person name="Pittman G.S."/>
            <person name="Pan S."/>
            <person name="Pollard J."/>
            <person name="Puri V."/>
            <person name="Reese M.G."/>
            <person name="Reinert K."/>
            <person name="Remington K."/>
            <person name="Saunders R.D.C."/>
            <person name="Scheeler F."/>
            <person name="Shen H."/>
            <person name="Shue B.C."/>
            <person name="Siden-Kiamos I."/>
            <person name="Simpson M."/>
            <person name="Skupski M.P."/>
            <person name="Smith T.J."/>
            <person name="Spier E."/>
            <person name="Spradling A.C."/>
            <person name="Stapleton M."/>
            <person name="Strong R."/>
            <person name="Sun E."/>
            <person name="Svirskas R."/>
            <person name="Tector C."/>
            <person name="Turner R."/>
            <person name="Venter E."/>
            <person name="Wang A.H."/>
            <person name="Wang X."/>
            <person name="Wang Z.-Y."/>
            <person name="Wassarman D.A."/>
            <person name="Weinstock G.M."/>
            <person name="Weissenbach J."/>
            <person name="Williams S.M."/>
            <person name="Woodage T."/>
            <person name="Worley K.C."/>
            <person name="Wu D."/>
            <person name="Yang S."/>
            <person name="Yao Q.A."/>
            <person name="Ye J."/>
            <person name="Yeh R.-F."/>
            <person name="Zaveri J.S."/>
            <person name="Zhan M."/>
            <person name="Zhang G."/>
            <person name="Zhao Q."/>
            <person name="Zheng L."/>
            <person name="Zheng X.H."/>
            <person name="Zhong F.N."/>
            <person name="Zhong W."/>
            <person name="Zhou X."/>
            <person name="Zhu S.C."/>
            <person name="Zhu X."/>
            <person name="Smith H.O."/>
            <person name="Gibbs R.A."/>
            <person name="Myers E.W."/>
            <person name="Rubin G.M."/>
            <person name="Venter J.C."/>
        </authorList>
    </citation>
    <scope>NUCLEOTIDE SEQUENCE [LARGE SCALE GENOMIC DNA]</scope>
    <source>
        <strain>Berkeley</strain>
    </source>
</reference>
<reference key="2">
    <citation type="journal article" date="2002" name="Genome Biol.">
        <title>Annotation of the Drosophila melanogaster euchromatic genome: a systematic review.</title>
        <authorList>
            <person name="Misra S."/>
            <person name="Crosby M.A."/>
            <person name="Mungall C.J."/>
            <person name="Matthews B.B."/>
            <person name="Campbell K.S."/>
            <person name="Hradecky P."/>
            <person name="Huang Y."/>
            <person name="Kaminker J.S."/>
            <person name="Millburn G.H."/>
            <person name="Prochnik S.E."/>
            <person name="Smith C.D."/>
            <person name="Tupy J.L."/>
            <person name="Whitfield E.J."/>
            <person name="Bayraktaroglu L."/>
            <person name="Berman B.P."/>
            <person name="Bettencourt B.R."/>
            <person name="Celniker S.E."/>
            <person name="de Grey A.D.N.J."/>
            <person name="Drysdale R.A."/>
            <person name="Harris N.L."/>
            <person name="Richter J."/>
            <person name="Russo S."/>
            <person name="Schroeder A.J."/>
            <person name="Shu S.Q."/>
            <person name="Stapleton M."/>
            <person name="Yamada C."/>
            <person name="Ashburner M."/>
            <person name="Gelbart W.M."/>
            <person name="Rubin G.M."/>
            <person name="Lewis S.E."/>
        </authorList>
    </citation>
    <scope>GENOME REANNOTATION</scope>
    <source>
        <strain>Berkeley</strain>
    </source>
</reference>
<reference key="3">
    <citation type="journal article" date="2002" name="Genome Biol.">
        <title>A Drosophila full-length cDNA resource.</title>
        <authorList>
            <person name="Stapleton M."/>
            <person name="Carlson J.W."/>
            <person name="Brokstein P."/>
            <person name="Yu C."/>
            <person name="Champe M."/>
            <person name="George R.A."/>
            <person name="Guarin H."/>
            <person name="Kronmiller B."/>
            <person name="Pacleb J.M."/>
            <person name="Park S."/>
            <person name="Wan K.H."/>
            <person name="Rubin G.M."/>
            <person name="Celniker S.E."/>
        </authorList>
    </citation>
    <scope>NUCLEOTIDE SEQUENCE [LARGE SCALE MRNA]</scope>
    <source>
        <strain>Berkeley</strain>
    </source>
</reference>
<reference key="4">
    <citation type="journal article" date="2018" name="Cell Rep.">
        <title>Analysis of Drosophila STING reveals an evolutionarily conserved antimicrobial function.</title>
        <authorList>
            <person name="Martin M."/>
            <person name="Hiroyasu A."/>
            <person name="Guzman R.M."/>
            <person name="Roberts S.A."/>
            <person name="Goodman A.G."/>
        </authorList>
    </citation>
    <scope>ACTIVITY REGULATION</scope>
    <scope>DISRUPTION PHENOTYPE</scope>
</reference>
<reference key="5">
    <citation type="journal article" date="2021" name="Nature">
        <title>Two cGAS-like receptors induce antiviral immunity in Drosophila.</title>
        <authorList>
            <person name="Holleufer A."/>
            <person name="Winther K.G."/>
            <person name="Gad H.H."/>
            <person name="Ai X."/>
            <person name="Chen Y."/>
            <person name="Li L."/>
            <person name="Wei Z."/>
            <person name="Deng H."/>
            <person name="Liu J."/>
            <person name="Frederiksen N.A."/>
            <person name="Simonsen B."/>
            <person name="Andersen L.L."/>
            <person name="Kleigrewe K."/>
            <person name="Dalskov L."/>
            <person name="Pichlmair A."/>
            <person name="Cai H."/>
            <person name="Imler J.L."/>
            <person name="Hartmann R."/>
        </authorList>
    </citation>
    <scope>FUNCTION</scope>
    <scope>MUTAGENESIS OF 70-GLU--ASP-72</scope>
</reference>
<sequence length="346" mass="40294">MSTANHFQRILEKLSISDNERAVYTKEAEEIQNYVVDELKRVDKTFRQVFDGLSLGGSYLDRVKLNLPDEFDLHMKLKFPFDIRPTRIDQGFIYLEADLTVINPQRIHRIVLQDWLRNAFRKVFRSNQTIATTSNRVYKLTYTLEGYGCAHTILAVCGSRSISFDLVPAFEFSGSQWPFDICPVPADVSNNWPWFAIPQQKKKSAKPRTTFMVCAPHWEREIMKGKDNLKNVLRLMKGLRDAHARKLPHLSSYMLKTVLLHRLESADWERDLGTLLVEMWSHLVDHLRARRLEFFLAKDHNVFNRMNQNEIKICLENASTLLRKLCIAQTCGGSYHHVAQLFNIPN</sequence>
<name>CGASL_DROME</name>
<organism>
    <name type="scientific">Drosophila melanogaster</name>
    <name type="common">Fruit fly</name>
    <dbReference type="NCBI Taxonomy" id="7227"/>
    <lineage>
        <taxon>Eukaryota</taxon>
        <taxon>Metazoa</taxon>
        <taxon>Ecdysozoa</taxon>
        <taxon>Arthropoda</taxon>
        <taxon>Hexapoda</taxon>
        <taxon>Insecta</taxon>
        <taxon>Pterygota</taxon>
        <taxon>Neoptera</taxon>
        <taxon>Endopterygota</taxon>
        <taxon>Diptera</taxon>
        <taxon>Brachycera</taxon>
        <taxon>Muscomorpha</taxon>
        <taxon>Ephydroidea</taxon>
        <taxon>Drosophilidae</taxon>
        <taxon>Drosophila</taxon>
        <taxon>Sophophora</taxon>
    </lineage>
</organism>
<comment type="function">
    <text evidence="2 4">Probable nucleotidyltransferase that catalyzes the formation of cyclic dinucleotide second messenger in response to some unknown stimulus (By similarity). Does not catalyze the formation of cyclic GMP-AMP from ATP and GTP (PubMed:34261128).</text>
</comment>
<comment type="cofactor">
    <cofactor evidence="1">
        <name>Mg(2+)</name>
        <dbReference type="ChEBI" id="CHEBI:18420"/>
    </cofactor>
    <cofactor evidence="1">
        <name>Mn(2+)</name>
        <dbReference type="ChEBI" id="CHEBI:29035"/>
    </cofactor>
</comment>
<comment type="activity regulation">
    <text evidence="3">Activated in response of some unknown stimulus (PubMed:29924997). Not activated in response to L-monocytogenes infection (PubMed:29924997).</text>
</comment>
<comment type="disruption phenotype">
    <text evidence="3">Flies display a normal antiviral immune response.</text>
</comment>
<comment type="similarity">
    <text evidence="5">Belongs to the mab-21 family.</text>
</comment>
<gene>
    <name evidence="6" type="ORF">CG7194</name>
</gene>
<evidence type="ECO:0000250" key="1">
    <source>
        <dbReference type="UniProtKB" id="A1ZA55"/>
    </source>
</evidence>
<evidence type="ECO:0000250" key="2">
    <source>
        <dbReference type="UniProtKB" id="Q8N884"/>
    </source>
</evidence>
<evidence type="ECO:0000269" key="3">
    <source>
    </source>
</evidence>
<evidence type="ECO:0000269" key="4">
    <source>
    </source>
</evidence>
<evidence type="ECO:0000305" key="5"/>
<evidence type="ECO:0000312" key="6">
    <source>
        <dbReference type="FlyBase" id="FBgn0035868"/>
    </source>
</evidence>
<dbReference type="EC" id="2.7.7.-" evidence="2"/>
<dbReference type="EMBL" id="AE014296">
    <property type="protein sequence ID" value="AAF50449.1"/>
    <property type="molecule type" value="Genomic_DNA"/>
</dbReference>
<dbReference type="EMBL" id="BT022230">
    <property type="protein sequence ID" value="AAY54646.1"/>
    <property type="molecule type" value="mRNA"/>
</dbReference>
<dbReference type="RefSeq" id="NP_648203.1">
    <property type="nucleotide sequence ID" value="NM_139946.2"/>
</dbReference>
<dbReference type="SMR" id="Q9VSH0"/>
<dbReference type="IntAct" id="Q9VSH0">
    <property type="interactions" value="12"/>
</dbReference>
<dbReference type="STRING" id="7227.FBpp0076437"/>
<dbReference type="PaxDb" id="7227-FBpp0076437"/>
<dbReference type="DNASU" id="38933"/>
<dbReference type="EnsemblMetazoa" id="FBtr0076714">
    <property type="protein sequence ID" value="FBpp0076437"/>
    <property type="gene ID" value="FBgn0035868"/>
</dbReference>
<dbReference type="GeneID" id="38933"/>
<dbReference type="KEGG" id="dme:Dmel_CG7194"/>
<dbReference type="UCSC" id="CG7194-RA">
    <property type="organism name" value="d. melanogaster"/>
</dbReference>
<dbReference type="AGR" id="FB:FBgn0035868"/>
<dbReference type="FlyBase" id="FBgn0035868">
    <property type="gene designation" value="CG7194"/>
</dbReference>
<dbReference type="VEuPathDB" id="VectorBase:FBgn0035868"/>
<dbReference type="eggNOG" id="KOG3963">
    <property type="taxonomic scope" value="Eukaryota"/>
</dbReference>
<dbReference type="GeneTree" id="ENSGT01050000244827"/>
<dbReference type="HOGENOM" id="CLU_068972_0_0_1"/>
<dbReference type="InParanoid" id="Q9VSH0"/>
<dbReference type="OMA" id="HWEREIM"/>
<dbReference type="OrthoDB" id="6054650at2759"/>
<dbReference type="PhylomeDB" id="Q9VSH0"/>
<dbReference type="BioGRID-ORCS" id="38933">
    <property type="hits" value="1 hit in 1 CRISPR screen"/>
</dbReference>
<dbReference type="GenomeRNAi" id="38933"/>
<dbReference type="PRO" id="PR:Q9VSH0"/>
<dbReference type="Proteomes" id="UP000000803">
    <property type="component" value="Chromosome 3L"/>
</dbReference>
<dbReference type="Bgee" id="FBgn0035868">
    <property type="expression patterns" value="Expressed in cyst progenitor cell (Drosophila) in testis and 39 other cell types or tissues"/>
</dbReference>
<dbReference type="GO" id="GO:0005524">
    <property type="term" value="F:ATP binding"/>
    <property type="evidence" value="ECO:0007669"/>
    <property type="project" value="UniProtKB-KW"/>
</dbReference>
<dbReference type="GO" id="GO:0005525">
    <property type="term" value="F:GTP binding"/>
    <property type="evidence" value="ECO:0007669"/>
    <property type="project" value="UniProtKB-KW"/>
</dbReference>
<dbReference type="GO" id="GO:0046872">
    <property type="term" value="F:metal ion binding"/>
    <property type="evidence" value="ECO:0007669"/>
    <property type="project" value="UniProtKB-KW"/>
</dbReference>
<dbReference type="GO" id="GO:0016779">
    <property type="term" value="F:nucleotidyltransferase activity"/>
    <property type="evidence" value="ECO:0007669"/>
    <property type="project" value="UniProtKB-KW"/>
</dbReference>
<dbReference type="GO" id="GO:0055070">
    <property type="term" value="P:copper ion homeostasis"/>
    <property type="evidence" value="ECO:0000270"/>
    <property type="project" value="FlyBase"/>
</dbReference>
<dbReference type="Gene3D" id="1.10.1410.40">
    <property type="match status" value="1"/>
</dbReference>
<dbReference type="Gene3D" id="3.30.460.90">
    <property type="match status" value="1"/>
</dbReference>
<dbReference type="InterPro" id="IPR046903">
    <property type="entry name" value="Mab-21-like_nuc_Trfase"/>
</dbReference>
<dbReference type="InterPro" id="IPR046906">
    <property type="entry name" value="Mab-21_HhH/H2TH-like"/>
</dbReference>
<dbReference type="InterPro" id="IPR024810">
    <property type="entry name" value="MAB21L/cGLR"/>
</dbReference>
<dbReference type="PANTHER" id="PTHR10656">
    <property type="entry name" value="CELL FATE DETERMINING PROTEIN MAB21-RELATED"/>
    <property type="match status" value="1"/>
</dbReference>
<dbReference type="PANTHER" id="PTHR10656:SF42">
    <property type="entry name" value="CYCLIC GMP-AMP SYNTHASE-LIKE PROTEIN-RELATED"/>
    <property type="match status" value="1"/>
</dbReference>
<dbReference type="Pfam" id="PF03281">
    <property type="entry name" value="Mab-21"/>
    <property type="match status" value="1"/>
</dbReference>
<dbReference type="Pfam" id="PF20266">
    <property type="entry name" value="Mab-21_C"/>
    <property type="match status" value="1"/>
</dbReference>
<dbReference type="SMART" id="SM01265">
    <property type="entry name" value="Mab-21"/>
    <property type="match status" value="1"/>
</dbReference>
<keyword id="KW-0067">ATP-binding</keyword>
<keyword id="KW-0342">GTP-binding</keyword>
<keyword id="KW-0460">Magnesium</keyword>
<keyword id="KW-0464">Manganese</keyword>
<keyword id="KW-0479">Metal-binding</keyword>
<keyword id="KW-0547">Nucleotide-binding</keyword>
<keyword id="KW-0548">Nucleotidyltransferase</keyword>
<keyword id="KW-1185">Reference proteome</keyword>
<keyword id="KW-0808">Transferase</keyword>
<protein>
    <recommendedName>
        <fullName evidence="5">Cyclic GMP-AMP synthase-like protein</fullName>
        <ecNumber evidence="2">2.7.7.-</ecNumber>
    </recommendedName>
</protein>
<feature type="chain" id="PRO_0000454443" description="Cyclic GMP-AMP synthase-like protein">
    <location>
        <begin position="1"/>
        <end position="346"/>
    </location>
</feature>
<feature type="binding site" evidence="2">
    <location>
        <position position="58"/>
    </location>
    <ligand>
        <name>ATP</name>
        <dbReference type="ChEBI" id="CHEBI:30616"/>
    </ligand>
</feature>
<feature type="binding site" evidence="2">
    <location>
        <begin position="70"/>
        <end position="72"/>
    </location>
    <ligand>
        <name>ATP</name>
        <dbReference type="ChEBI" id="CHEBI:30616"/>
    </ligand>
</feature>
<feature type="binding site" evidence="2">
    <location>
        <position position="70"/>
    </location>
    <ligand>
        <name>Mg(2+)</name>
        <dbReference type="ChEBI" id="CHEBI:18420"/>
        <note>catalytic</note>
    </ligand>
</feature>
<feature type="binding site" evidence="2">
    <location>
        <position position="72"/>
    </location>
    <ligand>
        <name>Mg(2+)</name>
        <dbReference type="ChEBI" id="CHEBI:18420"/>
        <note>catalytic</note>
    </ligand>
</feature>
<feature type="binding site" evidence="2">
    <location>
        <position position="165"/>
    </location>
    <ligand>
        <name>GTP</name>
        <dbReference type="ChEBI" id="CHEBI:37565"/>
    </ligand>
</feature>
<feature type="binding site" evidence="2">
    <location>
        <position position="165"/>
    </location>
    <ligand>
        <name>Mg(2+)</name>
        <dbReference type="ChEBI" id="CHEBI:18420"/>
        <note>catalytic</note>
    </ligand>
</feature>
<feature type="binding site" evidence="2">
    <location>
        <begin position="212"/>
        <end position="219"/>
    </location>
    <ligand>
        <name>GTP</name>
        <dbReference type="ChEBI" id="CHEBI:37565"/>
    </ligand>
</feature>
<feature type="binding site" evidence="2">
    <location>
        <begin position="216"/>
        <end position="219"/>
    </location>
    <ligand>
        <name>ATP</name>
        <dbReference type="ChEBI" id="CHEBI:30616"/>
    </ligand>
</feature>
<feature type="binding site" evidence="2">
    <location>
        <position position="237"/>
    </location>
    <ligand>
        <name>ATP</name>
        <dbReference type="ChEBI" id="CHEBI:30616"/>
    </ligand>
</feature>
<feature type="binding site" evidence="2">
    <location>
        <begin position="252"/>
        <end position="256"/>
    </location>
    <ligand>
        <name>ATP</name>
        <dbReference type="ChEBI" id="CHEBI:30616"/>
    </ligand>
</feature>
<feature type="mutagenesis site" description="No effect on antiviral immune response." evidence="4">
    <original>EFD</original>
    <variation>AFA</variation>
    <location>
        <begin position="70"/>
        <end position="72"/>
    </location>
</feature>